<reference key="1">
    <citation type="journal article" date="2004" name="Nat. Genet.">
        <title>Complete sequencing and characterization of 21,243 full-length human cDNAs.</title>
        <authorList>
            <person name="Ota T."/>
            <person name="Suzuki Y."/>
            <person name="Nishikawa T."/>
            <person name="Otsuki T."/>
            <person name="Sugiyama T."/>
            <person name="Irie R."/>
            <person name="Wakamatsu A."/>
            <person name="Hayashi K."/>
            <person name="Sato H."/>
            <person name="Nagai K."/>
            <person name="Kimura K."/>
            <person name="Makita H."/>
            <person name="Sekine M."/>
            <person name="Obayashi M."/>
            <person name="Nishi T."/>
            <person name="Shibahara T."/>
            <person name="Tanaka T."/>
            <person name="Ishii S."/>
            <person name="Yamamoto J."/>
            <person name="Saito K."/>
            <person name="Kawai Y."/>
            <person name="Isono Y."/>
            <person name="Nakamura Y."/>
            <person name="Nagahari K."/>
            <person name="Murakami K."/>
            <person name="Yasuda T."/>
            <person name="Iwayanagi T."/>
            <person name="Wagatsuma M."/>
            <person name="Shiratori A."/>
            <person name="Sudo H."/>
            <person name="Hosoiri T."/>
            <person name="Kaku Y."/>
            <person name="Kodaira H."/>
            <person name="Kondo H."/>
            <person name="Sugawara M."/>
            <person name="Takahashi M."/>
            <person name="Kanda K."/>
            <person name="Yokoi T."/>
            <person name="Furuya T."/>
            <person name="Kikkawa E."/>
            <person name="Omura Y."/>
            <person name="Abe K."/>
            <person name="Kamihara K."/>
            <person name="Katsuta N."/>
            <person name="Sato K."/>
            <person name="Tanikawa M."/>
            <person name="Yamazaki M."/>
            <person name="Ninomiya K."/>
            <person name="Ishibashi T."/>
            <person name="Yamashita H."/>
            <person name="Murakawa K."/>
            <person name="Fujimori K."/>
            <person name="Tanai H."/>
            <person name="Kimata M."/>
            <person name="Watanabe M."/>
            <person name="Hiraoka S."/>
            <person name="Chiba Y."/>
            <person name="Ishida S."/>
            <person name="Ono Y."/>
            <person name="Takiguchi S."/>
            <person name="Watanabe S."/>
            <person name="Yosida M."/>
            <person name="Hotuta T."/>
            <person name="Kusano J."/>
            <person name="Kanehori K."/>
            <person name="Takahashi-Fujii A."/>
            <person name="Hara H."/>
            <person name="Tanase T.-O."/>
            <person name="Nomura Y."/>
            <person name="Togiya S."/>
            <person name="Komai F."/>
            <person name="Hara R."/>
            <person name="Takeuchi K."/>
            <person name="Arita M."/>
            <person name="Imose N."/>
            <person name="Musashino K."/>
            <person name="Yuuki H."/>
            <person name="Oshima A."/>
            <person name="Sasaki N."/>
            <person name="Aotsuka S."/>
            <person name="Yoshikawa Y."/>
            <person name="Matsunawa H."/>
            <person name="Ichihara T."/>
            <person name="Shiohata N."/>
            <person name="Sano S."/>
            <person name="Moriya S."/>
            <person name="Momiyama H."/>
            <person name="Satoh N."/>
            <person name="Takami S."/>
            <person name="Terashima Y."/>
            <person name="Suzuki O."/>
            <person name="Nakagawa S."/>
            <person name="Senoh A."/>
            <person name="Mizoguchi H."/>
            <person name="Goto Y."/>
            <person name="Shimizu F."/>
            <person name="Wakebe H."/>
            <person name="Hishigaki H."/>
            <person name="Watanabe T."/>
            <person name="Sugiyama A."/>
            <person name="Takemoto M."/>
            <person name="Kawakami B."/>
            <person name="Yamazaki M."/>
            <person name="Watanabe K."/>
            <person name="Kumagai A."/>
            <person name="Itakura S."/>
            <person name="Fukuzumi Y."/>
            <person name="Fujimori Y."/>
            <person name="Komiyama M."/>
            <person name="Tashiro H."/>
            <person name="Tanigami A."/>
            <person name="Fujiwara T."/>
            <person name="Ono T."/>
            <person name="Yamada K."/>
            <person name="Fujii Y."/>
            <person name="Ozaki K."/>
            <person name="Hirao M."/>
            <person name="Ohmori Y."/>
            <person name="Kawabata A."/>
            <person name="Hikiji T."/>
            <person name="Kobatake N."/>
            <person name="Inagaki H."/>
            <person name="Ikema Y."/>
            <person name="Okamoto S."/>
            <person name="Okitani R."/>
            <person name="Kawakami T."/>
            <person name="Noguchi S."/>
            <person name="Itoh T."/>
            <person name="Shigeta K."/>
            <person name="Senba T."/>
            <person name="Matsumura K."/>
            <person name="Nakajima Y."/>
            <person name="Mizuno T."/>
            <person name="Morinaga M."/>
            <person name="Sasaki M."/>
            <person name="Togashi T."/>
            <person name="Oyama M."/>
            <person name="Hata H."/>
            <person name="Watanabe M."/>
            <person name="Komatsu T."/>
            <person name="Mizushima-Sugano J."/>
            <person name="Satoh T."/>
            <person name="Shirai Y."/>
            <person name="Takahashi Y."/>
            <person name="Nakagawa K."/>
            <person name="Okumura K."/>
            <person name="Nagase T."/>
            <person name="Nomura N."/>
            <person name="Kikuchi H."/>
            <person name="Masuho Y."/>
            <person name="Yamashita R."/>
            <person name="Nakai K."/>
            <person name="Yada T."/>
            <person name="Nakamura Y."/>
            <person name="Ohara O."/>
            <person name="Isogai T."/>
            <person name="Sugano S."/>
        </authorList>
    </citation>
    <scope>NUCLEOTIDE SEQUENCE [LARGE SCALE MRNA] (ISOFORMS 4; 5 AND 6)</scope>
    <source>
        <tissue>Stomach</tissue>
        <tissue>Testis</tissue>
        <tissue>Tongue</tissue>
    </source>
</reference>
<reference key="2">
    <citation type="journal article" date="2004" name="Nature">
        <title>The DNA sequence and biology of human chromosome 19.</title>
        <authorList>
            <person name="Grimwood J."/>
            <person name="Gordon L.A."/>
            <person name="Olsen A.S."/>
            <person name="Terry A."/>
            <person name="Schmutz J."/>
            <person name="Lamerdin J.E."/>
            <person name="Hellsten U."/>
            <person name="Goodstein D."/>
            <person name="Couronne O."/>
            <person name="Tran-Gyamfi M."/>
            <person name="Aerts A."/>
            <person name="Altherr M."/>
            <person name="Ashworth L."/>
            <person name="Bajorek E."/>
            <person name="Black S."/>
            <person name="Branscomb E."/>
            <person name="Caenepeel S."/>
            <person name="Carrano A.V."/>
            <person name="Caoile C."/>
            <person name="Chan Y.M."/>
            <person name="Christensen M."/>
            <person name="Cleland C.A."/>
            <person name="Copeland A."/>
            <person name="Dalin E."/>
            <person name="Dehal P."/>
            <person name="Denys M."/>
            <person name="Detter J.C."/>
            <person name="Escobar J."/>
            <person name="Flowers D."/>
            <person name="Fotopulos D."/>
            <person name="Garcia C."/>
            <person name="Georgescu A.M."/>
            <person name="Glavina T."/>
            <person name="Gomez M."/>
            <person name="Gonzales E."/>
            <person name="Groza M."/>
            <person name="Hammon N."/>
            <person name="Hawkins T."/>
            <person name="Haydu L."/>
            <person name="Ho I."/>
            <person name="Huang W."/>
            <person name="Israni S."/>
            <person name="Jett J."/>
            <person name="Kadner K."/>
            <person name="Kimball H."/>
            <person name="Kobayashi A."/>
            <person name="Larionov V."/>
            <person name="Leem S.-H."/>
            <person name="Lopez F."/>
            <person name="Lou Y."/>
            <person name="Lowry S."/>
            <person name="Malfatti S."/>
            <person name="Martinez D."/>
            <person name="McCready P.M."/>
            <person name="Medina C."/>
            <person name="Morgan J."/>
            <person name="Nelson K."/>
            <person name="Nolan M."/>
            <person name="Ovcharenko I."/>
            <person name="Pitluck S."/>
            <person name="Pollard M."/>
            <person name="Popkie A.P."/>
            <person name="Predki P."/>
            <person name="Quan G."/>
            <person name="Ramirez L."/>
            <person name="Rash S."/>
            <person name="Retterer J."/>
            <person name="Rodriguez A."/>
            <person name="Rogers S."/>
            <person name="Salamov A."/>
            <person name="Salazar A."/>
            <person name="She X."/>
            <person name="Smith D."/>
            <person name="Slezak T."/>
            <person name="Solovyev V."/>
            <person name="Thayer N."/>
            <person name="Tice H."/>
            <person name="Tsai M."/>
            <person name="Ustaszewska A."/>
            <person name="Vo N."/>
            <person name="Wagner M."/>
            <person name="Wheeler J."/>
            <person name="Wu K."/>
            <person name="Xie G."/>
            <person name="Yang J."/>
            <person name="Dubchak I."/>
            <person name="Furey T.S."/>
            <person name="DeJong P."/>
            <person name="Dickson M."/>
            <person name="Gordon D."/>
            <person name="Eichler E.E."/>
            <person name="Pennacchio L.A."/>
            <person name="Richardson P."/>
            <person name="Stubbs L."/>
            <person name="Rokhsar D.S."/>
            <person name="Myers R.M."/>
            <person name="Rubin E.M."/>
            <person name="Lucas S.M."/>
        </authorList>
    </citation>
    <scope>NUCLEOTIDE SEQUENCE [LARGE SCALE GENOMIC DNA]</scope>
</reference>
<reference key="3">
    <citation type="submission" date="2005-07" db="EMBL/GenBank/DDBJ databases">
        <authorList>
            <person name="Mural R.J."/>
            <person name="Istrail S."/>
            <person name="Sutton G.G."/>
            <person name="Florea L."/>
            <person name="Halpern A.L."/>
            <person name="Mobarry C.M."/>
            <person name="Lippert R."/>
            <person name="Walenz B."/>
            <person name="Shatkay H."/>
            <person name="Dew I."/>
            <person name="Miller J.R."/>
            <person name="Flanigan M.J."/>
            <person name="Edwards N.J."/>
            <person name="Bolanos R."/>
            <person name="Fasulo D."/>
            <person name="Halldorsson B.V."/>
            <person name="Hannenhalli S."/>
            <person name="Turner R."/>
            <person name="Yooseph S."/>
            <person name="Lu F."/>
            <person name="Nusskern D.R."/>
            <person name="Shue B.C."/>
            <person name="Zheng X.H."/>
            <person name="Zhong F."/>
            <person name="Delcher A.L."/>
            <person name="Huson D.H."/>
            <person name="Kravitz S.A."/>
            <person name="Mouchard L."/>
            <person name="Reinert K."/>
            <person name="Remington K.A."/>
            <person name="Clark A.G."/>
            <person name="Waterman M.S."/>
            <person name="Eichler E.E."/>
            <person name="Adams M.D."/>
            <person name="Hunkapiller M.W."/>
            <person name="Myers E.W."/>
            <person name="Venter J.C."/>
        </authorList>
    </citation>
    <scope>NUCLEOTIDE SEQUENCE [LARGE SCALE GENOMIC DNA]</scope>
</reference>
<reference key="4">
    <citation type="journal article" date="2004" name="Genome Res.">
        <title>The status, quality, and expansion of the NIH full-length cDNA project: the Mammalian Gene Collection (MGC).</title>
        <authorList>
            <consortium name="The MGC Project Team"/>
        </authorList>
    </citation>
    <scope>NUCLEOTIDE SEQUENCE [LARGE SCALE MRNA] (ISOFORM 3)</scope>
    <scope>VARIANT THR-898</scope>
</reference>
<reference key="5">
    <citation type="journal article" date="2005" name="J. Cell Sci.">
        <title>PATJ connects and stabilizes apical and lateral components of tight junctions in human intestinal cells.</title>
        <authorList>
            <person name="Michel D."/>
            <person name="Arsanto J.P."/>
            <person name="Massey-Harroche D."/>
            <person name="Beclin C."/>
            <person name="Wijnholds J."/>
            <person name="Le Bivic A."/>
        </authorList>
    </citation>
    <scope>FUNCTION</scope>
</reference>
<reference key="6">
    <citation type="journal article" date="2008" name="Proc. Natl. Acad. Sci. U.S.A.">
        <title>A quantitative atlas of mitotic phosphorylation.</title>
        <authorList>
            <person name="Dephoure N."/>
            <person name="Zhou C."/>
            <person name="Villen J."/>
            <person name="Beausoleil S.A."/>
            <person name="Bakalarski C.E."/>
            <person name="Elledge S.J."/>
            <person name="Gygi S.P."/>
        </authorList>
    </citation>
    <scope>PHOSPHORYLATION [LARGE SCALE ANALYSIS] AT SER-164; SER-905 AND SER-906</scope>
    <scope>IDENTIFICATION BY MASS SPECTROMETRY [LARGE SCALE ANALYSIS]</scope>
    <source>
        <tissue>Cervix carcinoma</tissue>
    </source>
</reference>
<reference key="7">
    <citation type="journal article" date="2009" name="BMC Immunol.">
        <title>Identification of SH3 domain interaction partners of human FasL (CD178) by phage display screening.</title>
        <authorList>
            <person name="Voss M."/>
            <person name="Lettau M."/>
            <person name="Janssen O."/>
        </authorList>
    </citation>
    <scope>INTERACTION WITH FASLG</scope>
</reference>
<reference key="8">
    <citation type="journal article" date="2009" name="Biol. Cell">
        <title>Characterization of the ubinuclein protein as a new member of the nuclear and adhesion complex components (NACos).</title>
        <authorList>
            <person name="Aho S."/>
            <person name="Lupo J."/>
            <person name="Coly P.-A."/>
            <person name="Sabine A."/>
            <person name="Castellazzi M."/>
            <person name="Morand P."/>
            <person name="Sergeant A."/>
            <person name="Manet E."/>
            <person name="Boyer V."/>
            <person name="Gruffat H."/>
        </authorList>
    </citation>
    <scope>INTERACTION WITH UBN1</scope>
</reference>
<reference key="9">
    <citation type="journal article" date="2009" name="Sci. Signal.">
        <title>Quantitative phosphoproteomic analysis of T cell receptor signaling reveals system-wide modulation of protein-protein interactions.</title>
        <authorList>
            <person name="Mayya V."/>
            <person name="Lundgren D.H."/>
            <person name="Hwang S.-I."/>
            <person name="Rezaul K."/>
            <person name="Wu L."/>
            <person name="Eng J.K."/>
            <person name="Rodionov V."/>
            <person name="Han D.K."/>
        </authorList>
    </citation>
    <scope>PHOSPHORYLATION [LARGE SCALE ANALYSIS] AT SER-164</scope>
    <scope>IDENTIFICATION BY MASS SPECTROMETRY [LARGE SCALE ANALYSIS]</scope>
    <source>
        <tissue>Leukemic T-cell</tissue>
    </source>
</reference>
<reference key="10">
    <citation type="journal article" date="2010" name="Eur. J. Cell Biol.">
        <title>Role of calcium signalling and phosphorylations in disruption of the epithelial junctions by Pseudomonas aeruginosa quorum sensing molecule.</title>
        <authorList>
            <person name="Vikstroem E."/>
            <person name="Bui L."/>
            <person name="Konradsson P."/>
            <person name="Magnusson K.E."/>
        </authorList>
    </citation>
    <scope>INDUCTION</scope>
</reference>
<reference key="11">
    <citation type="journal article" date="2010" name="Sci. Signal.">
        <title>Quantitative phosphoproteomics reveals widespread full phosphorylation site occupancy during mitosis.</title>
        <authorList>
            <person name="Olsen J.V."/>
            <person name="Vermeulen M."/>
            <person name="Santamaria A."/>
            <person name="Kumar C."/>
            <person name="Miller M.L."/>
            <person name="Jensen L.J."/>
            <person name="Gnad F."/>
            <person name="Cox J."/>
            <person name="Jensen T.S."/>
            <person name="Nigg E.A."/>
            <person name="Brunak S."/>
            <person name="Mann M."/>
        </authorList>
    </citation>
    <scope>PHOSPHORYLATION [LARGE SCALE ANALYSIS] AT SER-164; SER-905 AND SER-906</scope>
    <scope>IDENTIFICATION BY MASS SPECTROMETRY [LARGE SCALE ANALYSIS]</scope>
    <source>
        <tissue>Cervix carcinoma</tissue>
    </source>
</reference>
<reference key="12">
    <citation type="journal article" date="2011" name="Mol. Biol. Cell">
        <title>Tight function zonula occludens-3 regulates cyclin D1-dependent cell proliferation.</title>
        <authorList>
            <person name="Capaldo C.T."/>
            <person name="Koch S."/>
            <person name="Kwon M."/>
            <person name="Laur O."/>
            <person name="Parkos C.A."/>
            <person name="Nusrat A."/>
        </authorList>
    </citation>
    <scope>FUNCTION</scope>
    <scope>SUBCELLULAR LOCATION</scope>
    <scope>INTERACTION WITH CCND1</scope>
</reference>
<reference key="13">
    <citation type="journal article" date="2011" name="Sci. Signal.">
        <title>System-wide temporal characterization of the proteome and phosphoproteome of human embryonic stem cell differentiation.</title>
        <authorList>
            <person name="Rigbolt K.T."/>
            <person name="Prokhorova T.A."/>
            <person name="Akimov V."/>
            <person name="Henningsen J."/>
            <person name="Johansen P.T."/>
            <person name="Kratchmarova I."/>
            <person name="Kassem M."/>
            <person name="Mann M."/>
            <person name="Olsen J.V."/>
            <person name="Blagoev B."/>
        </authorList>
    </citation>
    <scope>PHOSPHORYLATION [LARGE SCALE ANALYSIS] AT SER-164</scope>
    <scope>IDENTIFICATION BY MASS SPECTROMETRY [LARGE SCALE ANALYSIS]</scope>
</reference>
<reference key="14">
    <citation type="journal article" date="2012" name="Infect. Immun.">
        <title>The Staphylococcus aureus alpha-toxin perturbs the barrier function in Caco-2 epithelial cell monolayers by altering junctional integrity.</title>
        <authorList>
            <person name="Kwak Y.K."/>
            <person name="Vikstroem E."/>
            <person name="Magnusson K.E."/>
            <person name="Vecsey-Semjen B."/>
            <person name="Colque-Navarro P."/>
            <person name="Moellby R."/>
        </authorList>
    </citation>
    <scope>INDUCTION</scope>
</reference>
<reference key="15">
    <citation type="journal article" date="2013" name="J. Proteome Res.">
        <title>Toward a comprehensive characterization of a human cancer cell phosphoproteome.</title>
        <authorList>
            <person name="Zhou H."/>
            <person name="Di Palma S."/>
            <person name="Preisinger C."/>
            <person name="Peng M."/>
            <person name="Polat A.N."/>
            <person name="Heck A.J."/>
            <person name="Mohammed S."/>
        </authorList>
    </citation>
    <scope>PHOSPHORYLATION [LARGE SCALE ANALYSIS] AT SER-112; SER-164; SER-203; SER-591 AND SER-856</scope>
    <scope>IDENTIFICATION BY MASS SPECTROMETRY [LARGE SCALE ANALYSIS]</scope>
    <source>
        <tissue>Cervix carcinoma</tissue>
        <tissue>Erythroleukemia</tissue>
    </source>
</reference>
<reference key="16">
    <citation type="journal article" date="2013" name="Mol. Cell. Biol.">
        <title>Delineation of the key aspects in the regulation of epithelial monolayer formation.</title>
        <authorList>
            <person name="Aschauer L."/>
            <person name="Gruber L.N."/>
            <person name="Pfaller W."/>
            <person name="Limonciel A."/>
            <person name="Athersuch T.J."/>
            <person name="Cavill R."/>
            <person name="Khan A."/>
            <person name="Gstraunthaler G."/>
            <person name="Grillari J."/>
            <person name="Grillari R."/>
            <person name="Hewitt P."/>
            <person name="Leonard M.O."/>
            <person name="Wilmes A."/>
            <person name="Jennings P."/>
        </authorList>
    </citation>
    <scope>INDUCTION</scope>
    <scope>SUBCELLULAR LOCATION</scope>
</reference>
<reference key="17">
    <citation type="journal article" date="2014" name="J. Nutr. Biochem.">
        <title>Curcumin prevents leptin-induced tight junction dysfunction in intestinal Caco-2 BBe cells.</title>
        <authorList>
            <person name="Kim C.Y."/>
            <person name="Kim K.H."/>
        </authorList>
    </citation>
    <scope>INDUCTION</scope>
</reference>
<reference key="18">
    <citation type="journal article" date="2014" name="J. Proteomics">
        <title>An enzyme assisted RP-RPLC approach for in-depth analysis of human liver phosphoproteome.</title>
        <authorList>
            <person name="Bian Y."/>
            <person name="Song C."/>
            <person name="Cheng K."/>
            <person name="Dong M."/>
            <person name="Wang F."/>
            <person name="Huang J."/>
            <person name="Sun D."/>
            <person name="Wang L."/>
            <person name="Ye M."/>
            <person name="Zou H."/>
        </authorList>
    </citation>
    <scope>PHOSPHORYLATION [LARGE SCALE ANALYSIS] AT SER-136; SER-319; THR-325; SER-327; SER-371; SER-591 AND SER-906</scope>
    <scope>IDENTIFICATION BY MASS SPECTROMETRY [LARGE SCALE ANALYSIS]</scope>
    <source>
        <tissue>Liver</tissue>
    </source>
</reference>
<reference key="19">
    <citation type="submission" date="2009-11" db="PDB data bank">
        <title>Crystal structure of the SH3-kinase fragment of tight junction protein 3 (TJP3) in apo-form.</title>
        <authorList>
            <consortium name="Structural genomics consortium (SGC)"/>
        </authorList>
    </citation>
    <scope>X-RAY CRYSTALLOGRAPHY (2.8 ANGSTROMS) OF 475-775</scope>
</reference>
<name>ZO3_HUMAN</name>
<feature type="chain" id="PRO_0000094546" description="Tight junction protein ZO-3">
    <location>
        <begin position="1"/>
        <end position="919"/>
    </location>
</feature>
<feature type="domain" description="PDZ 1" evidence="4">
    <location>
        <begin position="11"/>
        <end position="93"/>
    </location>
</feature>
<feature type="domain" description="PDZ 2" evidence="4">
    <location>
        <begin position="195"/>
        <end position="272"/>
    </location>
</feature>
<feature type="domain" description="PDZ 3" evidence="4">
    <location>
        <begin position="380"/>
        <end position="446"/>
    </location>
</feature>
<feature type="domain" description="SH3" evidence="5">
    <location>
        <begin position="475"/>
        <end position="549"/>
    </location>
</feature>
<feature type="domain" description="Guanylate kinase-like" evidence="3">
    <location>
        <begin position="580"/>
        <end position="761"/>
    </location>
</feature>
<feature type="region of interest" description="Disordered" evidence="6">
    <location>
        <begin position="92"/>
        <end position="173"/>
    </location>
</feature>
<feature type="region of interest" description="Disordered" evidence="6">
    <location>
        <begin position="279"/>
        <end position="377"/>
    </location>
</feature>
<feature type="region of interest" description="Disordered" evidence="6">
    <location>
        <begin position="791"/>
        <end position="886"/>
    </location>
</feature>
<feature type="region of interest" description="Disordered" evidence="6">
    <location>
        <begin position="899"/>
        <end position="919"/>
    </location>
</feature>
<feature type="compositionally biased region" description="Basic and acidic residues" evidence="6">
    <location>
        <begin position="117"/>
        <end position="131"/>
    </location>
</feature>
<feature type="compositionally biased region" description="Basic residues" evidence="6">
    <location>
        <begin position="147"/>
        <end position="163"/>
    </location>
</feature>
<feature type="compositionally biased region" description="Basic and acidic residues" evidence="6">
    <location>
        <begin position="332"/>
        <end position="360"/>
    </location>
</feature>
<feature type="compositionally biased region" description="Low complexity" evidence="6">
    <location>
        <begin position="791"/>
        <end position="801"/>
    </location>
</feature>
<feature type="compositionally biased region" description="Gly residues" evidence="6">
    <location>
        <begin position="812"/>
        <end position="828"/>
    </location>
</feature>
<feature type="modified residue" description="Phosphoserine" evidence="23">
    <location>
        <position position="112"/>
    </location>
</feature>
<feature type="modified residue" description="Phosphoserine" evidence="24">
    <location>
        <position position="136"/>
    </location>
</feature>
<feature type="modified residue" description="Phosphoserine" evidence="19 20 21 22 23">
    <location>
        <position position="164"/>
    </location>
</feature>
<feature type="modified residue" description="Phosphoserine" evidence="2">
    <location>
        <position position="169"/>
    </location>
</feature>
<feature type="modified residue" description="Phosphoserine" evidence="23">
    <location>
        <position position="203"/>
    </location>
</feature>
<feature type="modified residue" description="Phosphoserine" evidence="24">
    <location>
        <position position="319"/>
    </location>
</feature>
<feature type="modified residue" description="Phosphothreonine" evidence="24">
    <location>
        <position position="325"/>
    </location>
</feature>
<feature type="modified residue" description="Phosphoserine" evidence="24">
    <location>
        <position position="327"/>
    </location>
</feature>
<feature type="modified residue" description="Phosphoserine" evidence="24">
    <location>
        <position position="371"/>
    </location>
</feature>
<feature type="modified residue" description="Phosphoserine" evidence="23 24">
    <location>
        <position position="591"/>
    </location>
</feature>
<feature type="modified residue" description="Phosphoserine" evidence="23">
    <location>
        <position position="856"/>
    </location>
</feature>
<feature type="modified residue" description="Phosphoserine" evidence="19 21">
    <location>
        <position position="905"/>
    </location>
</feature>
<feature type="modified residue" description="Phosphoserine" evidence="19 21 24">
    <location>
        <position position="906"/>
    </location>
</feature>
<feature type="splice variant" id="VSP_053844" description="In isoform 6." evidence="16">
    <location>
        <begin position="1"/>
        <end position="36"/>
    </location>
</feature>
<feature type="splice variant" id="VSP_040238" description="In isoform 3." evidence="17">
    <original>M</original>
    <variation>MNLCGLMPIFPAPLDQVADM</variation>
    <location>
        <position position="1"/>
    </location>
</feature>
<feature type="splice variant" id="VSP_047022" description="In isoform 4." evidence="16">
    <original>M</original>
    <variation>MAVRFQVADM</variation>
    <location>
        <position position="1"/>
    </location>
</feature>
<feature type="sequence variant" id="VAR_056114" description="In dbSNP:rs1046268." evidence="7">
    <original>M</original>
    <variation>T</variation>
    <location>
        <position position="898"/>
    </location>
</feature>
<feature type="sequence conflict" description="In Ref. 4; AAI08907." evidence="18" ref="4">
    <original>R</original>
    <variation>H</variation>
    <location>
        <position position="19"/>
    </location>
</feature>
<feature type="sequence conflict" description="In Ref. 1; BAG52285." evidence="18" ref="1">
    <original>H</original>
    <variation>L</variation>
    <location>
        <position position="96"/>
    </location>
</feature>
<feature type="sequence conflict" description="In Ref. 1; BAG54652." evidence="18" ref="1">
    <original>L</original>
    <variation>P</variation>
    <location>
        <position position="449"/>
    </location>
</feature>
<feature type="sequence conflict" description="In Ref. 1; BAG52285." evidence="18" ref="1">
    <original>R</original>
    <variation>H</variation>
    <location>
        <position position="802"/>
    </location>
</feature>
<feature type="sequence conflict" description="In Ref. 1; BAG52285." evidence="18" ref="1">
    <original>H</original>
    <variation>R</variation>
    <location>
        <position position="901"/>
    </location>
</feature>
<feature type="sequence conflict" description="In Ref. 1; BAG65278." evidence="18" ref="1">
    <original>T</original>
    <variation>M</variation>
    <location>
        <position position="917"/>
    </location>
</feature>
<feature type="strand" evidence="25">
    <location>
        <begin position="478"/>
        <end position="482"/>
    </location>
</feature>
<feature type="strand" evidence="25">
    <location>
        <begin position="490"/>
        <end position="493"/>
    </location>
</feature>
<feature type="strand" evidence="25">
    <location>
        <begin position="501"/>
        <end position="506"/>
    </location>
</feature>
<feature type="strand" evidence="25">
    <location>
        <begin position="522"/>
        <end position="527"/>
    </location>
</feature>
<feature type="strand" evidence="25">
    <location>
        <begin position="533"/>
        <end position="539"/>
    </location>
</feature>
<feature type="helix" evidence="25">
    <location>
        <begin position="542"/>
        <end position="555"/>
    </location>
</feature>
<feature type="helix" evidence="25">
    <location>
        <begin position="596"/>
        <end position="602"/>
    </location>
</feature>
<feature type="strand" evidence="25">
    <location>
        <begin position="606"/>
        <end position="614"/>
    </location>
</feature>
<feature type="strand" evidence="25">
    <location>
        <begin position="621"/>
        <end position="625"/>
    </location>
</feature>
<feature type="helix" evidence="25">
    <location>
        <begin position="628"/>
        <end position="638"/>
    </location>
</feature>
<feature type="turn" evidence="25">
    <location>
        <begin position="640"/>
        <end position="642"/>
    </location>
</feature>
<feature type="strand" evidence="25">
    <location>
        <begin position="643"/>
        <end position="645"/>
    </location>
</feature>
<feature type="helix" evidence="25">
    <location>
        <begin position="661"/>
        <end position="669"/>
    </location>
</feature>
<feature type="strand" evidence="25">
    <location>
        <begin position="673"/>
        <end position="676"/>
    </location>
</feature>
<feature type="helix" evidence="25">
    <location>
        <begin position="680"/>
        <end position="688"/>
    </location>
</feature>
<feature type="strand" evidence="25">
    <location>
        <begin position="694"/>
        <end position="701"/>
    </location>
</feature>
<feature type="helix" evidence="25">
    <location>
        <begin position="703"/>
        <end position="713"/>
    </location>
</feature>
<feature type="helix" evidence="25">
    <location>
        <begin position="721"/>
        <end position="735"/>
    </location>
</feature>
<feature type="helix" evidence="25">
    <location>
        <begin position="736"/>
        <end position="738"/>
    </location>
</feature>
<feature type="strand" evidence="25">
    <location>
        <begin position="740"/>
        <end position="745"/>
    </location>
</feature>
<feature type="strand" evidence="25">
    <location>
        <begin position="747"/>
        <end position="749"/>
    </location>
</feature>
<feature type="helix" evidence="25">
    <location>
        <begin position="751"/>
        <end position="763"/>
    </location>
</feature>
<feature type="strand" evidence="25">
    <location>
        <begin position="766"/>
        <end position="771"/>
    </location>
</feature>
<keyword id="KW-0002">3D-structure</keyword>
<keyword id="KW-0025">Alternative splicing</keyword>
<keyword id="KW-0965">Cell junction</keyword>
<keyword id="KW-1003">Cell membrane</keyword>
<keyword id="KW-0472">Membrane</keyword>
<keyword id="KW-0539">Nucleus</keyword>
<keyword id="KW-0597">Phosphoprotein</keyword>
<keyword id="KW-1267">Proteomics identification</keyword>
<keyword id="KW-1185">Reference proteome</keyword>
<keyword id="KW-0677">Repeat</keyword>
<keyword id="KW-0728">SH3 domain</keyword>
<keyword id="KW-0796">Tight junction</keyword>
<accession>O95049</accession>
<accession>A6NFP3</accession>
<accession>B3KR73</accession>
<accession>B3KXZ0</accession>
<accession>B4E2W6</accession>
<accession>F5H2X0</accession>
<accession>F5H4S9</accession>
<accession>K7EK22</accession>
<accession>Q32N01</accession>
<proteinExistence type="evidence at protein level"/>
<protein>
    <recommendedName>
        <fullName>Tight junction protein ZO-3</fullName>
    </recommendedName>
    <alternativeName>
        <fullName>Tight junction protein 3</fullName>
    </alternativeName>
    <alternativeName>
        <fullName>Zona occludens protein 3</fullName>
    </alternativeName>
    <alternativeName>
        <fullName>Zonula occludens protein 3</fullName>
    </alternativeName>
</protein>
<organism>
    <name type="scientific">Homo sapiens</name>
    <name type="common">Human</name>
    <dbReference type="NCBI Taxonomy" id="9606"/>
    <lineage>
        <taxon>Eukaryota</taxon>
        <taxon>Metazoa</taxon>
        <taxon>Chordata</taxon>
        <taxon>Craniata</taxon>
        <taxon>Vertebrata</taxon>
        <taxon>Euteleostomi</taxon>
        <taxon>Mammalia</taxon>
        <taxon>Eutheria</taxon>
        <taxon>Euarchontoglires</taxon>
        <taxon>Primates</taxon>
        <taxon>Haplorrhini</taxon>
        <taxon>Catarrhini</taxon>
        <taxon>Hominidae</taxon>
        <taxon>Homo</taxon>
    </lineage>
</organism>
<comment type="function">
    <text evidence="1 2 8 12">TJP1, TJP2, and TJP3 are closely related scaffolding proteins that link tight junction (TJ) transmembrane proteins such as claudins, junctional adhesion molecules, and occludin to the actin cytoskeleton (PubMed:16129888). The tight junction acts to limit movement of substances through the paracellular space and as a boundary between the compositionally distinct apical and basolateral plasma membrane domains of epithelial and endothelial cells. Binds and recruits PATJ to tight junctions where it connects and stabilizes apical and lateral components of tight junctions (PubMed:16129888). Promotes cell-cycle progression through the sequestration of cyclin D1 (CCND1) at tight junctions during mitosis which prevents CCND1 degradation during M-phase and enables S-phase transition (PubMed:21411630). With TJP1 and TJP2, participates in the junctional retention and stability of the transcription factor DBPA, but is not involved in its shuttling to the nucleus (By similarity). Contrary to TJP2, TJP3 is dispensable for individual viability, embryonic development, epithelial differentiation, and the establishment of TJs, at least in the laboratory environment (By similarity).</text>
</comment>
<comment type="subunit">
    <text evidence="1 9 10 12">Interacts with occludin OCLN, claudins and TPJ1 (By similarity). Interacts with PATJ (By similarity). Interacts with UBN1 (PubMed:20434232). Interacts with FASLG (PubMed:19807924). Interacts with CCND1 (PubMed:21411630).</text>
</comment>
<comment type="interaction">
    <interactant intactId="EBI-1171427">
        <id>O95049</id>
    </interactant>
    <interactant intactId="EBI-26374535">
        <id>K9N5R3</id>
        <label>E</label>
    </interactant>
    <organismsDiffer>true</organismsDiffer>
    <experiments>2</experiments>
</comment>
<comment type="subcellular location">
    <subcellularLocation>
        <location evidence="12">Cell membrane</location>
        <topology evidence="12">Peripheral membrane protein</topology>
        <orientation evidence="12">Cytoplasmic side</orientation>
    </subcellularLocation>
    <subcellularLocation>
        <location evidence="12 14">Cell junction</location>
        <location evidence="12 14">Tight junction</location>
    </subcellularLocation>
    <subcellularLocation>
        <location evidence="14">Nucleus</location>
    </subcellularLocation>
    <text evidence="2 14">Exhibits predominant nuclear expression in proliferating cells but is exclusively junctionally expressed after confluence is reached (PubMed:23608536). Shows an epithelial-specific tight junction localization in a TJP1/TJP2-dependent fashion (By similarity).</text>
</comment>
<comment type="alternative products">
    <event type="alternative splicing"/>
    <isoform>
        <id>O95049-1</id>
        <name>5</name>
        <sequence type="displayed"/>
    </isoform>
    <isoform>
        <id>O95049-3</id>
        <name>3</name>
        <sequence type="described" ref="VSP_040238"/>
    </isoform>
    <isoform>
        <id>O95049-4</id>
        <name>4</name>
        <sequence type="described" ref="VSP_047022"/>
    </isoform>
    <isoform>
        <id>O95049-5</id>
        <name>6</name>
        <sequence type="described" ref="VSP_053844"/>
    </isoform>
</comment>
<comment type="induction">
    <text evidence="11 13 14 15">Exhibits enhanced expression in matured epithelial layers (PubMed:23608536). Apical leptin, Staphylococcus aureus alpha-toxin and Pseudomonas aeruginosa acyl-homoserine lactone 3O-C12-HSl lower expression levels, altering junctional integrity in intestinal cells (PubMed:20434232, PubMed:22354024, PubMed:24314862).</text>
</comment>
<comment type="PTM">
    <text evidence="1">Phosphorylated (By similarity).</text>
</comment>
<comment type="similarity">
    <text evidence="18">Belongs to the MAGUK family.</text>
</comment>
<comment type="sequence caution" evidence="18">
    <conflict type="erroneous gene model prediction">
        <sequence resource="EMBL-CDS" id="AAC72274"/>
    </conflict>
</comment>
<comment type="sequence caution" evidence="18">
    <conflict type="erroneous gene model prediction">
        <sequence resource="EMBL-CDS" id="EAW69293"/>
    </conflict>
</comment>
<evidence type="ECO:0000250" key="1">
    <source>
        <dbReference type="UniProtKB" id="O62683"/>
    </source>
</evidence>
<evidence type="ECO:0000250" key="2">
    <source>
        <dbReference type="UniProtKB" id="Q9QXY1"/>
    </source>
</evidence>
<evidence type="ECO:0000255" key="3">
    <source>
        <dbReference type="PROSITE-ProRule" id="PRU00100"/>
    </source>
</evidence>
<evidence type="ECO:0000255" key="4">
    <source>
        <dbReference type="PROSITE-ProRule" id="PRU00143"/>
    </source>
</evidence>
<evidence type="ECO:0000255" key="5">
    <source>
        <dbReference type="PROSITE-ProRule" id="PRU00192"/>
    </source>
</evidence>
<evidence type="ECO:0000256" key="6">
    <source>
        <dbReference type="SAM" id="MobiDB-lite"/>
    </source>
</evidence>
<evidence type="ECO:0000269" key="7">
    <source>
    </source>
</evidence>
<evidence type="ECO:0000269" key="8">
    <source>
    </source>
</evidence>
<evidence type="ECO:0000269" key="9">
    <source>
    </source>
</evidence>
<evidence type="ECO:0000269" key="10">
    <source>
    </source>
</evidence>
<evidence type="ECO:0000269" key="11">
    <source>
    </source>
</evidence>
<evidence type="ECO:0000269" key="12">
    <source>
    </source>
</evidence>
<evidence type="ECO:0000269" key="13">
    <source>
    </source>
</evidence>
<evidence type="ECO:0000269" key="14">
    <source>
    </source>
</evidence>
<evidence type="ECO:0000269" key="15">
    <source>
    </source>
</evidence>
<evidence type="ECO:0000303" key="16">
    <source>
    </source>
</evidence>
<evidence type="ECO:0000303" key="17">
    <source>
    </source>
</evidence>
<evidence type="ECO:0000305" key="18"/>
<evidence type="ECO:0007744" key="19">
    <source>
    </source>
</evidence>
<evidence type="ECO:0007744" key="20">
    <source>
    </source>
</evidence>
<evidence type="ECO:0007744" key="21">
    <source>
    </source>
</evidence>
<evidence type="ECO:0007744" key="22">
    <source>
    </source>
</evidence>
<evidence type="ECO:0007744" key="23">
    <source>
    </source>
</evidence>
<evidence type="ECO:0007744" key="24">
    <source>
    </source>
</evidence>
<evidence type="ECO:0007829" key="25">
    <source>
        <dbReference type="PDB" id="3KFV"/>
    </source>
</evidence>
<sequence>MEELTIWEQHTATLSKDPRRGFGIAISGGRDRPGGSMVVSDVVPGGPAEGRLQTGDHIVMVNGVSMENATSAFAIQILKTCTKMANITVKRPRRIHLPATKASPSSPGRQDSDEDDGPQRVEEVDQGRGYDGDSSSGSGRSWDERSRRPRPGRRGRAGSHGRRSPGGGSEANGLALVSGFKRLPRQDVQMKPVKSVLVKRRDSEEFGVKLGSQIFIKHITDSGLAARHRGLQEGDLILQINGVSSQNLSLNDTRRLIEKSEGKLSLLVLRDRGQFLVNIPPAVSDSDSSPLEDISDLASELSQAPPSHIPPPPRHAQRSPEASQTDSPVESPRLRRESSVDSRTISEPDEQRSELPRESSYDIYRVPSSQSMEDRGYSPDTRVVRFLKGKSIGLRLAGGNDVGIFVSGVQAGSPADGQGIQEGDQILQVNDVPFQNLTREEAVQFLLGLPPGEEMELVTQRKQDIFWKMVQSRVGDSFYIRTHFELEPSPPSGLGFTRGDVFHVLDTLHPGPGQSHARGGHWLAVRMGRDLREQERGIIPNQSRAEQLASLEAAQRAVGVGPGSSAGSNARAEFWRLRGLRRGAKKTTQRSREDLSALTRQGRYPPYERVVLREASFKRPVVILGPVADIAMQKLTAEMPDQFEIAETVSRTDSPSKIIKLDTVRVIAEKDKHALLDVTPSAIERLNYVQYYPIVVFFIPESRPALKALRQWLAPASRRSTRRLYAQAQKLRKHSSHLFTATIPLNGTSDTWYQELKAIIREQQTRPIWTAEDQLDGSLEDNLDLPHHGLADSSADLSCDSRVNSDYETDGEGGAYTDGEGYTDGEGGPYTDVDDEPPAPALARSSEPVQADESQSPRDRGRISAHQGAQVDSRHPQGQWRQDSMRTYEREALKKKFMRVHDAESSDEDGYDWGPATDL</sequence>
<gene>
    <name type="primary">TJP3</name>
    <name type="synonym">ZO3</name>
</gene>
<dbReference type="EMBL" id="AK091118">
    <property type="protein sequence ID" value="BAG52285.1"/>
    <property type="molecule type" value="mRNA"/>
</dbReference>
<dbReference type="EMBL" id="AK128237">
    <property type="protein sequence ID" value="BAG54652.1"/>
    <property type="molecule type" value="mRNA"/>
</dbReference>
<dbReference type="EMBL" id="AK304462">
    <property type="protein sequence ID" value="BAG65278.1"/>
    <property type="molecule type" value="mRNA"/>
</dbReference>
<dbReference type="EMBL" id="AC005954">
    <property type="protein sequence ID" value="AAC72274.1"/>
    <property type="status" value="ALT_SEQ"/>
    <property type="molecule type" value="Genomic_DNA"/>
</dbReference>
<dbReference type="EMBL" id="AC006125">
    <property type="status" value="NOT_ANNOTATED_CDS"/>
    <property type="molecule type" value="Genomic_DNA"/>
</dbReference>
<dbReference type="EMBL" id="CH471139">
    <property type="protein sequence ID" value="EAW69293.1"/>
    <property type="status" value="ALT_SEQ"/>
    <property type="molecule type" value="Genomic_DNA"/>
</dbReference>
<dbReference type="EMBL" id="BC108906">
    <property type="protein sequence ID" value="AAI08907.1"/>
    <property type="molecule type" value="mRNA"/>
</dbReference>
<dbReference type="CCDS" id="CCDS32873.2">
    <molecule id="O95049-1"/>
</dbReference>
<dbReference type="CCDS" id="CCDS59332.1">
    <molecule id="O95049-4"/>
</dbReference>
<dbReference type="RefSeq" id="NP_001254489.1">
    <molecule id="O95049-1"/>
    <property type="nucleotide sequence ID" value="NM_001267560.2"/>
</dbReference>
<dbReference type="RefSeq" id="NP_001254490.1">
    <molecule id="O95049-4"/>
    <property type="nucleotide sequence ID" value="NM_001267561.2"/>
</dbReference>
<dbReference type="PDB" id="3KFV">
    <property type="method" value="X-ray"/>
    <property type="resolution" value="2.80 A"/>
    <property type="chains" value="A=475-775"/>
</dbReference>
<dbReference type="PDBsum" id="3KFV"/>
<dbReference type="SMR" id="O95049"/>
<dbReference type="BioGRID" id="118025">
    <property type="interactions" value="21"/>
</dbReference>
<dbReference type="FunCoup" id="O95049">
    <property type="interactions" value="276"/>
</dbReference>
<dbReference type="IntAct" id="O95049">
    <property type="interactions" value="10"/>
</dbReference>
<dbReference type="MINT" id="O95049"/>
<dbReference type="STRING" id="9606.ENSP00000465419"/>
<dbReference type="TCDB" id="8.A.24.1.13">
    <property type="family name" value="the ezrin/radixin/moesin-binding phosphoprotein 50 (ebp50) family"/>
</dbReference>
<dbReference type="GlyCosmos" id="O95049">
    <property type="glycosylation" value="1 site, 1 glycan"/>
</dbReference>
<dbReference type="GlyGen" id="O95049">
    <property type="glycosylation" value="2 sites, 1 O-linked glycan (1 site)"/>
</dbReference>
<dbReference type="iPTMnet" id="O95049"/>
<dbReference type="PhosphoSitePlus" id="O95049"/>
<dbReference type="BioMuta" id="TJP3"/>
<dbReference type="jPOST" id="O95049"/>
<dbReference type="MassIVE" id="O95049"/>
<dbReference type="PaxDb" id="9606-ENSP00000465419"/>
<dbReference type="PeptideAtlas" id="O95049"/>
<dbReference type="ProteomicsDB" id="26098"/>
<dbReference type="ProteomicsDB" id="26665"/>
<dbReference type="ProteomicsDB" id="50630">
    <molecule id="O95049-1"/>
</dbReference>
<dbReference type="ProteomicsDB" id="50632">
    <molecule id="O95049-3"/>
</dbReference>
<dbReference type="Pumba" id="O95049"/>
<dbReference type="Antibodypedia" id="23311">
    <property type="antibodies" value="209 antibodies from 33 providers"/>
</dbReference>
<dbReference type="DNASU" id="27134"/>
<dbReference type="Ensembl" id="ENST00000539908.6">
    <molecule id="O95049-5"/>
    <property type="protein sequence ID" value="ENSP00000439991.1"/>
    <property type="gene ID" value="ENSG00000105289.15"/>
</dbReference>
<dbReference type="Ensembl" id="ENST00000541714.7">
    <molecule id="O95049-1"/>
    <property type="protein sequence ID" value="ENSP00000439278.1"/>
    <property type="gene ID" value="ENSG00000105289.15"/>
</dbReference>
<dbReference type="Ensembl" id="ENST00000587686.1">
    <molecule id="O95049-3"/>
    <property type="protein sequence ID" value="ENSP00000467864.1"/>
    <property type="gene ID" value="ENSG00000105289.15"/>
</dbReference>
<dbReference type="Ensembl" id="ENST00000589378.5">
    <molecule id="O95049-4"/>
    <property type="protein sequence ID" value="ENSP00000465419.1"/>
    <property type="gene ID" value="ENSG00000105289.15"/>
</dbReference>
<dbReference type="GeneID" id="27134"/>
<dbReference type="KEGG" id="hsa:27134"/>
<dbReference type="MANE-Select" id="ENST00000541714.7">
    <property type="protein sequence ID" value="ENSP00000439278.1"/>
    <property type="RefSeq nucleotide sequence ID" value="NM_001267560.2"/>
    <property type="RefSeq protein sequence ID" value="NP_001254489.1"/>
</dbReference>
<dbReference type="UCSC" id="uc010xhs.4">
    <molecule id="O95049-1"/>
    <property type="organism name" value="human"/>
</dbReference>
<dbReference type="AGR" id="HGNC:11829"/>
<dbReference type="CTD" id="27134"/>
<dbReference type="DisGeNET" id="27134"/>
<dbReference type="GeneCards" id="TJP3"/>
<dbReference type="HGNC" id="HGNC:11829">
    <property type="gene designation" value="TJP3"/>
</dbReference>
<dbReference type="HPA" id="ENSG00000105289">
    <property type="expression patterns" value="Tissue enhanced (intestine, stomach)"/>
</dbReference>
<dbReference type="MIM" id="612689">
    <property type="type" value="gene"/>
</dbReference>
<dbReference type="neXtProt" id="NX_O95049"/>
<dbReference type="OpenTargets" id="ENSG00000105289"/>
<dbReference type="PharmGKB" id="PA36534"/>
<dbReference type="VEuPathDB" id="HostDB:ENSG00000105289"/>
<dbReference type="eggNOG" id="KOG3580">
    <property type="taxonomic scope" value="Eukaryota"/>
</dbReference>
<dbReference type="GeneTree" id="ENSGT00940000160036"/>
<dbReference type="HOGENOM" id="CLU_006234_0_0_1"/>
<dbReference type="InParanoid" id="O95049"/>
<dbReference type="OMA" id="VLMRPVK"/>
<dbReference type="OrthoDB" id="418634at2759"/>
<dbReference type="PAN-GO" id="O95049">
    <property type="GO annotations" value="8 GO annotations based on evolutionary models"/>
</dbReference>
<dbReference type="TreeFam" id="TF315606"/>
<dbReference type="PathwayCommons" id="O95049"/>
<dbReference type="SignaLink" id="O95049"/>
<dbReference type="BioGRID-ORCS" id="27134">
    <property type="hits" value="24 hits in 1144 CRISPR screens"/>
</dbReference>
<dbReference type="CD-CODE" id="CCFFAF5A">
    <property type="entry name" value="Junctional condensate"/>
</dbReference>
<dbReference type="ChiTaRS" id="TJP3">
    <property type="organism name" value="human"/>
</dbReference>
<dbReference type="EvolutionaryTrace" id="O95049"/>
<dbReference type="GeneWiki" id="TJP3"/>
<dbReference type="GenomeRNAi" id="27134"/>
<dbReference type="Pharos" id="O95049">
    <property type="development level" value="Tbio"/>
</dbReference>
<dbReference type="PRO" id="PR:O95049"/>
<dbReference type="Proteomes" id="UP000005640">
    <property type="component" value="Chromosome 19"/>
</dbReference>
<dbReference type="RNAct" id="O95049">
    <property type="molecule type" value="protein"/>
</dbReference>
<dbReference type="Bgee" id="ENSG00000105289">
    <property type="expression patterns" value="Expressed in mucosa of transverse colon and 167 other cell types or tissues"/>
</dbReference>
<dbReference type="ExpressionAtlas" id="O95049">
    <property type="expression patterns" value="baseline and differential"/>
</dbReference>
<dbReference type="GO" id="GO:0005923">
    <property type="term" value="C:bicellular tight junction"/>
    <property type="evidence" value="ECO:0000314"/>
    <property type="project" value="UniProtKB"/>
</dbReference>
<dbReference type="GO" id="GO:0030054">
    <property type="term" value="C:cell junction"/>
    <property type="evidence" value="ECO:0000314"/>
    <property type="project" value="HPA"/>
</dbReference>
<dbReference type="GO" id="GO:0005654">
    <property type="term" value="C:nucleoplasm"/>
    <property type="evidence" value="ECO:0000314"/>
    <property type="project" value="HPA"/>
</dbReference>
<dbReference type="GO" id="GO:0005634">
    <property type="term" value="C:nucleus"/>
    <property type="evidence" value="ECO:0000314"/>
    <property type="project" value="UniProtKB"/>
</dbReference>
<dbReference type="GO" id="GO:0005886">
    <property type="term" value="C:plasma membrane"/>
    <property type="evidence" value="ECO:0000314"/>
    <property type="project" value="HPA"/>
</dbReference>
<dbReference type="GO" id="GO:0050839">
    <property type="term" value="F:cell adhesion molecule binding"/>
    <property type="evidence" value="ECO:0000318"/>
    <property type="project" value="GO_Central"/>
</dbReference>
<dbReference type="GO" id="GO:0098609">
    <property type="term" value="P:cell-cell adhesion"/>
    <property type="evidence" value="ECO:0000318"/>
    <property type="project" value="GO_Central"/>
</dbReference>
<dbReference type="GO" id="GO:0045216">
    <property type="term" value="P:cell-cell junction organization"/>
    <property type="evidence" value="ECO:0000318"/>
    <property type="project" value="GO_Central"/>
</dbReference>
<dbReference type="GO" id="GO:0090557">
    <property type="term" value="P:establishment of endothelial intestinal barrier"/>
    <property type="evidence" value="ECO:0000318"/>
    <property type="project" value="GO_Central"/>
</dbReference>
<dbReference type="GO" id="GO:0035633">
    <property type="term" value="P:maintenance of blood-brain barrier"/>
    <property type="evidence" value="ECO:0000303"/>
    <property type="project" value="ARUK-UCL"/>
</dbReference>
<dbReference type="GO" id="GO:1905605">
    <property type="term" value="P:positive regulation of blood-brain barrier permeability"/>
    <property type="evidence" value="ECO:0000318"/>
    <property type="project" value="GO_Central"/>
</dbReference>
<dbReference type="GO" id="GO:0150105">
    <property type="term" value="P:protein localization to cell-cell junction"/>
    <property type="evidence" value="ECO:0000318"/>
    <property type="project" value="GO_Central"/>
</dbReference>
<dbReference type="CDD" id="cd06727">
    <property type="entry name" value="PDZ1_ZO1-like"/>
    <property type="match status" value="1"/>
</dbReference>
<dbReference type="CDD" id="cd06728">
    <property type="entry name" value="PDZ2_ZO1-like_ds"/>
    <property type="match status" value="1"/>
</dbReference>
<dbReference type="CDD" id="cd06729">
    <property type="entry name" value="PDZ3_ZO1-like_domain"/>
    <property type="match status" value="1"/>
</dbReference>
<dbReference type="CDD" id="cd12028">
    <property type="entry name" value="SH3_ZO-3"/>
    <property type="match status" value="1"/>
</dbReference>
<dbReference type="FunFam" id="2.30.42.10:FF:000009">
    <property type="entry name" value="Putative tight junction protein ZO-1"/>
    <property type="match status" value="1"/>
</dbReference>
<dbReference type="FunFam" id="2.30.42.10:FF:000013">
    <property type="entry name" value="Putative tight junction protein ZO-1"/>
    <property type="match status" value="1"/>
</dbReference>
<dbReference type="FunFam" id="3.40.50.300:FF:000110">
    <property type="entry name" value="tight junction protein ZO-1 isoform X1"/>
    <property type="match status" value="1"/>
</dbReference>
<dbReference type="Gene3D" id="2.30.42.10">
    <property type="match status" value="3"/>
</dbReference>
<dbReference type="Gene3D" id="3.40.50.300">
    <property type="entry name" value="P-loop containing nucleotide triphosphate hydrolases"/>
    <property type="match status" value="1"/>
</dbReference>
<dbReference type="Gene3D" id="2.30.30.40">
    <property type="entry name" value="SH3 Domains"/>
    <property type="match status" value="1"/>
</dbReference>
<dbReference type="InterPro" id="IPR008145">
    <property type="entry name" value="GK/Ca_channel_bsu"/>
</dbReference>
<dbReference type="InterPro" id="IPR008144">
    <property type="entry name" value="Guanylate_kin-like_dom"/>
</dbReference>
<dbReference type="InterPro" id="IPR027417">
    <property type="entry name" value="P-loop_NTPase"/>
</dbReference>
<dbReference type="InterPro" id="IPR001478">
    <property type="entry name" value="PDZ"/>
</dbReference>
<dbReference type="InterPro" id="IPR036034">
    <property type="entry name" value="PDZ_sf"/>
</dbReference>
<dbReference type="InterPro" id="IPR036028">
    <property type="entry name" value="SH3-like_dom_sf"/>
</dbReference>
<dbReference type="InterPro" id="IPR001452">
    <property type="entry name" value="SH3_domain"/>
</dbReference>
<dbReference type="InterPro" id="IPR005417">
    <property type="entry name" value="ZO"/>
</dbReference>
<dbReference type="InterPro" id="IPR005420">
    <property type="entry name" value="ZO-3"/>
</dbReference>
<dbReference type="PANTHER" id="PTHR13865">
    <property type="entry name" value="TIGHT JUNCTION PROTEIN"/>
    <property type="match status" value="1"/>
</dbReference>
<dbReference type="PANTHER" id="PTHR13865:SF11">
    <property type="entry name" value="TIGHT JUNCTION PROTEIN ZO-3"/>
    <property type="match status" value="1"/>
</dbReference>
<dbReference type="Pfam" id="PF00625">
    <property type="entry name" value="Guanylate_kin"/>
    <property type="match status" value="1"/>
</dbReference>
<dbReference type="Pfam" id="PF00595">
    <property type="entry name" value="PDZ"/>
    <property type="match status" value="3"/>
</dbReference>
<dbReference type="Pfam" id="PF07653">
    <property type="entry name" value="SH3_2"/>
    <property type="match status" value="1"/>
</dbReference>
<dbReference type="PRINTS" id="PR01597">
    <property type="entry name" value="ZONOCCLUDNS"/>
</dbReference>
<dbReference type="PRINTS" id="PR01600">
    <property type="entry name" value="ZONOCCLUDNS3"/>
</dbReference>
<dbReference type="SMART" id="SM00072">
    <property type="entry name" value="GuKc"/>
    <property type="match status" value="1"/>
</dbReference>
<dbReference type="SMART" id="SM00228">
    <property type="entry name" value="PDZ"/>
    <property type="match status" value="3"/>
</dbReference>
<dbReference type="SMART" id="SM00326">
    <property type="entry name" value="SH3"/>
    <property type="match status" value="1"/>
</dbReference>
<dbReference type="SUPFAM" id="SSF52540">
    <property type="entry name" value="P-loop containing nucleoside triphosphate hydrolases"/>
    <property type="match status" value="1"/>
</dbReference>
<dbReference type="SUPFAM" id="SSF50156">
    <property type="entry name" value="PDZ domain-like"/>
    <property type="match status" value="3"/>
</dbReference>
<dbReference type="SUPFAM" id="SSF50044">
    <property type="entry name" value="SH3-domain"/>
    <property type="match status" value="1"/>
</dbReference>
<dbReference type="PROSITE" id="PS50052">
    <property type="entry name" value="GUANYLATE_KINASE_2"/>
    <property type="match status" value="1"/>
</dbReference>
<dbReference type="PROSITE" id="PS50106">
    <property type="entry name" value="PDZ"/>
    <property type="match status" value="3"/>
</dbReference>
<dbReference type="PROSITE" id="PS50002">
    <property type="entry name" value="SH3"/>
    <property type="match status" value="1"/>
</dbReference>